<evidence type="ECO:0000255" key="1">
    <source>
        <dbReference type="HAMAP-Rule" id="MF_00274"/>
    </source>
</evidence>
<name>Y4847_RHOPB</name>
<organism>
    <name type="scientific">Rhodopseudomonas palustris (strain BisB18)</name>
    <dbReference type="NCBI Taxonomy" id="316056"/>
    <lineage>
        <taxon>Bacteria</taxon>
        <taxon>Pseudomonadati</taxon>
        <taxon>Pseudomonadota</taxon>
        <taxon>Alphaproteobacteria</taxon>
        <taxon>Hyphomicrobiales</taxon>
        <taxon>Nitrobacteraceae</taxon>
        <taxon>Rhodopseudomonas</taxon>
    </lineage>
</organism>
<comment type="function">
    <text evidence="1">Binds to DNA and alters its conformation. May be involved in regulation of gene expression, nucleoid organization and DNA protection.</text>
</comment>
<comment type="subunit">
    <text evidence="1">Homodimer.</text>
</comment>
<comment type="subcellular location">
    <subcellularLocation>
        <location evidence="1">Cytoplasm</location>
        <location evidence="1">Nucleoid</location>
    </subcellularLocation>
</comment>
<comment type="similarity">
    <text evidence="1">Belongs to the YbaB/EbfC family.</text>
</comment>
<dbReference type="EMBL" id="CP000301">
    <property type="protein sequence ID" value="ABD90369.1"/>
    <property type="molecule type" value="Genomic_DNA"/>
</dbReference>
<dbReference type="SMR" id="Q20WW7"/>
<dbReference type="STRING" id="316056.RPC_4847"/>
<dbReference type="KEGG" id="rpc:RPC_4847"/>
<dbReference type="eggNOG" id="COG0718">
    <property type="taxonomic scope" value="Bacteria"/>
</dbReference>
<dbReference type="HOGENOM" id="CLU_140930_0_1_5"/>
<dbReference type="OrthoDB" id="9803080at2"/>
<dbReference type="GO" id="GO:0043590">
    <property type="term" value="C:bacterial nucleoid"/>
    <property type="evidence" value="ECO:0007669"/>
    <property type="project" value="UniProtKB-UniRule"/>
</dbReference>
<dbReference type="GO" id="GO:0005829">
    <property type="term" value="C:cytosol"/>
    <property type="evidence" value="ECO:0007669"/>
    <property type="project" value="TreeGrafter"/>
</dbReference>
<dbReference type="GO" id="GO:0003677">
    <property type="term" value="F:DNA binding"/>
    <property type="evidence" value="ECO:0007669"/>
    <property type="project" value="UniProtKB-UniRule"/>
</dbReference>
<dbReference type="Gene3D" id="3.30.1310.10">
    <property type="entry name" value="Nucleoid-associated protein YbaB-like domain"/>
    <property type="match status" value="1"/>
</dbReference>
<dbReference type="HAMAP" id="MF_00274">
    <property type="entry name" value="DNA_YbaB_EbfC"/>
    <property type="match status" value="1"/>
</dbReference>
<dbReference type="InterPro" id="IPR036894">
    <property type="entry name" value="YbaB-like_sf"/>
</dbReference>
<dbReference type="InterPro" id="IPR004401">
    <property type="entry name" value="YbaB/EbfC"/>
</dbReference>
<dbReference type="NCBIfam" id="TIGR00103">
    <property type="entry name" value="DNA_YbaB_EbfC"/>
    <property type="match status" value="1"/>
</dbReference>
<dbReference type="PANTHER" id="PTHR33449">
    <property type="entry name" value="NUCLEOID-ASSOCIATED PROTEIN YBAB"/>
    <property type="match status" value="1"/>
</dbReference>
<dbReference type="PANTHER" id="PTHR33449:SF1">
    <property type="entry name" value="NUCLEOID-ASSOCIATED PROTEIN YBAB"/>
    <property type="match status" value="1"/>
</dbReference>
<dbReference type="Pfam" id="PF02575">
    <property type="entry name" value="YbaB_DNA_bd"/>
    <property type="match status" value="1"/>
</dbReference>
<dbReference type="PIRSF" id="PIRSF004555">
    <property type="entry name" value="UCP004555"/>
    <property type="match status" value="1"/>
</dbReference>
<dbReference type="SUPFAM" id="SSF82607">
    <property type="entry name" value="YbaB-like"/>
    <property type="match status" value="1"/>
</dbReference>
<protein>
    <recommendedName>
        <fullName evidence="1">Nucleoid-associated protein RPC_4847</fullName>
    </recommendedName>
</protein>
<keyword id="KW-0963">Cytoplasm</keyword>
<keyword id="KW-0238">DNA-binding</keyword>
<sequence>MADFLGMMKQAAQLQSKMKAMQEELEHIEVEGISGGGLVSVRMTAKMEVKTIKIDPSLINADEAGVLEDLLVTALADAHRKAESAMQEKMQALTGGLSLPPGLGL</sequence>
<feature type="chain" id="PRO_1000003810" description="Nucleoid-associated protein RPC_4847">
    <location>
        <begin position="1"/>
        <end position="105"/>
    </location>
</feature>
<reference key="1">
    <citation type="submission" date="2006-03" db="EMBL/GenBank/DDBJ databases">
        <title>Complete sequence of Rhodopseudomonas palustris BisB18.</title>
        <authorList>
            <consortium name="US DOE Joint Genome Institute"/>
            <person name="Copeland A."/>
            <person name="Lucas S."/>
            <person name="Lapidus A."/>
            <person name="Barry K."/>
            <person name="Detter J.C."/>
            <person name="Glavina del Rio T."/>
            <person name="Hammon N."/>
            <person name="Israni S."/>
            <person name="Dalin E."/>
            <person name="Tice H."/>
            <person name="Pitluck S."/>
            <person name="Chain P."/>
            <person name="Malfatti S."/>
            <person name="Shin M."/>
            <person name="Vergez L."/>
            <person name="Schmutz J."/>
            <person name="Larimer F."/>
            <person name="Land M."/>
            <person name="Hauser L."/>
            <person name="Pelletier D.A."/>
            <person name="Kyrpides N."/>
            <person name="Anderson I."/>
            <person name="Oda Y."/>
            <person name="Harwood C.S."/>
            <person name="Richardson P."/>
        </authorList>
    </citation>
    <scope>NUCLEOTIDE SEQUENCE [LARGE SCALE GENOMIC DNA]</scope>
    <source>
        <strain>BisB18</strain>
    </source>
</reference>
<proteinExistence type="inferred from homology"/>
<gene>
    <name type="ordered locus">RPC_4847</name>
</gene>
<accession>Q20WW7</accession>